<comment type="function">
    <text evidence="1 3 4 8 9 10 11 12">Involved in targeting and insertion of nascent membrane proteins into the cytoplasmic membrane. Binds to the hydrophobic signal sequence of the ribosome-nascent chain (RNC) as it emerges from the ribosomes. The SRP-RNC complex is then targeted to the cytoplasmic membrane where it interacts with the SRP receptor FtsY. Interaction with FtsY leads to the transfer of the RNC complex to the Sec translocase for insertion into the membrane, the hydrolysis of GTP by both Ffh and FtsY, and the dissociation of the SRP-FtsY complex into the individual components.</text>
</comment>
<comment type="catalytic activity">
    <reaction evidence="1 3">
        <text>GTP + H2O = GDP + phosphate + H(+)</text>
        <dbReference type="Rhea" id="RHEA:19669"/>
        <dbReference type="ChEBI" id="CHEBI:15377"/>
        <dbReference type="ChEBI" id="CHEBI:15378"/>
        <dbReference type="ChEBI" id="CHEBI:37565"/>
        <dbReference type="ChEBI" id="CHEBI:43474"/>
        <dbReference type="ChEBI" id="CHEBI:58189"/>
        <dbReference type="EC" id="3.6.5.4"/>
    </reaction>
</comment>
<comment type="activity regulation">
    <text evidence="3">Conformation of the Ffh-FtsY complex and regulation of its GTPase activity are modulated by the 4.5S RNA. Formation of the FfH-FtsY complex leads to a mutual stimulation of both GTPases.</text>
</comment>
<comment type="subunit">
    <text evidence="1 2 5 6 7 8 9 12">Part of the signal recognition particle protein translocation system, which is composed of SRP and FtsY. SRP is a ribonucleoprotein composed of Ffh and a 4.5S RNA molecule. Metal ions are essential for the formation and stability of the SRP complex. Interacts with the ribosomes, via ribosomal protein L23. Interacts with FtsY.</text>
</comment>
<comment type="interaction">
    <interactant intactId="EBI-369938">
        <id>P0AGD7</id>
    </interactant>
    <interactant intactId="EBI-549067">
        <id>P10121</id>
        <label>ftsY</label>
    </interactant>
    <organismsDiffer>false</organismsDiffer>
    <experiments>10</experiments>
</comment>
<comment type="interaction">
    <interactant intactId="EBI-369938">
        <id>P0AGD7</id>
    </interactant>
    <interactant intactId="EBI-555342">
        <id>P0AGB3</id>
        <label>rpoH</label>
    </interactant>
    <organismsDiffer>false</organismsDiffer>
    <experiments>4</experiments>
</comment>
<comment type="subcellular location">
    <subcellularLocation>
        <location>Cytoplasm</location>
    </subcellularLocation>
    <text>The SRP-RNC complex is targeted to the cytoplasmic membrane.</text>
</comment>
<comment type="domain">
    <text evidence="1 2 6">Composed of three domains: the N-terminal N domain, which is responsible for interactions with the ribosome, the central G domain, which binds GTP, and the C-terminal M domain, which binds the RNA and the signal sequence of the RNC.</text>
</comment>
<comment type="disruption phenotype">
    <text evidence="4 10">Essential; deletion experiments lead to loss of inner membrane protein targeting. Also leads to reduced targeting of lipoproteins Lpp and BRP.</text>
</comment>
<comment type="similarity">
    <text evidence="1">Belongs to the GTP-binding SRP family. SRP54 subfamily.</text>
</comment>
<comment type="sequence caution" evidence="13">
    <conflict type="erroneous initiation">
        <sequence resource="EMBL-CDS" id="CAA25957"/>
    </conflict>
    <text>Truncated N-terminus.</text>
</comment>
<protein>
    <recommendedName>
        <fullName evidence="1">Signal recognition particle protein</fullName>
        <ecNumber evidence="1 3">3.6.5.4</ecNumber>
    </recommendedName>
    <alternativeName>
        <fullName evidence="1">Fifty-four homolog</fullName>
        <shortName>Ffh</shortName>
    </alternativeName>
    <alternativeName>
        <fullName>p48</fullName>
    </alternativeName>
</protein>
<name>SRP54_ECOLI</name>
<organism>
    <name type="scientific">Escherichia coli (strain K12)</name>
    <dbReference type="NCBI Taxonomy" id="83333"/>
    <lineage>
        <taxon>Bacteria</taxon>
        <taxon>Pseudomonadati</taxon>
        <taxon>Pseudomonadota</taxon>
        <taxon>Gammaproteobacteria</taxon>
        <taxon>Enterobacterales</taxon>
        <taxon>Enterobacteriaceae</taxon>
        <taxon>Escherichia</taxon>
    </lineage>
</organism>
<evidence type="ECO:0000255" key="1">
    <source>
        <dbReference type="HAMAP-Rule" id="MF_00306"/>
    </source>
</evidence>
<evidence type="ECO:0000269" key="2">
    <source>
    </source>
</evidence>
<evidence type="ECO:0000269" key="3">
    <source>
    </source>
</evidence>
<evidence type="ECO:0000269" key="4">
    <source>
    </source>
</evidence>
<evidence type="ECO:0000269" key="5">
    <source>
    </source>
</evidence>
<evidence type="ECO:0000269" key="6">
    <source>
    </source>
</evidence>
<evidence type="ECO:0000269" key="7">
    <source>
    </source>
</evidence>
<evidence type="ECO:0000269" key="8">
    <source>
    </source>
</evidence>
<evidence type="ECO:0000269" key="9">
    <source>
    </source>
</evidence>
<evidence type="ECO:0000269" key="10">
    <source>
    </source>
</evidence>
<evidence type="ECO:0000269" key="11">
    <source>
    </source>
</evidence>
<evidence type="ECO:0000269" key="12">
    <source>
    </source>
</evidence>
<evidence type="ECO:0000305" key="13"/>
<evidence type="ECO:0007829" key="14">
    <source>
        <dbReference type="PDB" id="1HQ1"/>
    </source>
</evidence>
<evidence type="ECO:0007829" key="15">
    <source>
        <dbReference type="PDB" id="4C7O"/>
    </source>
</evidence>
<evidence type="ECO:0007829" key="16">
    <source>
        <dbReference type="PDB" id="7O9I"/>
    </source>
</evidence>
<reference key="1">
    <citation type="journal article" date="1983" name="EMBO J.">
        <title>The nucleotide sequence of an Escherichia coli operon containing genes for the tRNA(m1G)methyltransferase, the ribosomal proteins S16 and L19 and a 21-K polypeptide.</title>
        <authorList>
            <person name="Bystroem A.S."/>
            <person name="Hjalmarsson K.J."/>
            <person name="Wikstroem P.M."/>
            <person name="Bjoerk G.R."/>
        </authorList>
    </citation>
    <scope>NUCLEOTIDE SEQUENCE [GENOMIC DNA]</scope>
</reference>
<reference key="2">
    <citation type="journal article" date="1997" name="DNA Res.">
        <title>Construction of a contiguous 874-kb sequence of the Escherichia coli-K12 genome corresponding to 50.0-68.8 min on the linkage map and analysis of its sequence features.</title>
        <authorList>
            <person name="Yamamoto Y."/>
            <person name="Aiba H."/>
            <person name="Baba T."/>
            <person name="Hayashi K."/>
            <person name="Inada T."/>
            <person name="Isono K."/>
            <person name="Itoh T."/>
            <person name="Kimura S."/>
            <person name="Kitagawa M."/>
            <person name="Makino K."/>
            <person name="Miki T."/>
            <person name="Mitsuhashi N."/>
            <person name="Mizobuchi K."/>
            <person name="Mori H."/>
            <person name="Nakade S."/>
            <person name="Nakamura Y."/>
            <person name="Nashimoto H."/>
            <person name="Oshima T."/>
            <person name="Oyama S."/>
            <person name="Saito N."/>
            <person name="Sampei G."/>
            <person name="Satoh Y."/>
            <person name="Sivasundaram S."/>
            <person name="Tagami H."/>
            <person name="Takahashi H."/>
            <person name="Takeda J."/>
            <person name="Takemoto K."/>
            <person name="Uehara K."/>
            <person name="Wada C."/>
            <person name="Yamagata S."/>
            <person name="Horiuchi T."/>
        </authorList>
    </citation>
    <scope>NUCLEOTIDE SEQUENCE [LARGE SCALE GENOMIC DNA]</scope>
    <source>
        <strain>K12 / W3110 / ATCC 27325 / DSM 5911</strain>
    </source>
</reference>
<reference key="3">
    <citation type="journal article" date="1997" name="Science">
        <title>The complete genome sequence of Escherichia coli K-12.</title>
        <authorList>
            <person name="Blattner F.R."/>
            <person name="Plunkett G. III"/>
            <person name="Bloch C.A."/>
            <person name="Perna N.T."/>
            <person name="Burland V."/>
            <person name="Riley M."/>
            <person name="Collado-Vides J."/>
            <person name="Glasner J.D."/>
            <person name="Rode C.K."/>
            <person name="Mayhew G.F."/>
            <person name="Gregor J."/>
            <person name="Davis N.W."/>
            <person name="Kirkpatrick H.A."/>
            <person name="Goeden M.A."/>
            <person name="Rose D.J."/>
            <person name="Mau B."/>
            <person name="Shao Y."/>
        </authorList>
    </citation>
    <scope>NUCLEOTIDE SEQUENCE [LARGE SCALE GENOMIC DNA]</scope>
    <source>
        <strain>K12 / MG1655 / ATCC 47076</strain>
    </source>
</reference>
<reference key="4">
    <citation type="journal article" date="2006" name="Mol. Syst. Biol.">
        <title>Highly accurate genome sequences of Escherichia coli K-12 strains MG1655 and W3110.</title>
        <authorList>
            <person name="Hayashi K."/>
            <person name="Morooka N."/>
            <person name="Yamamoto Y."/>
            <person name="Fujita K."/>
            <person name="Isono K."/>
            <person name="Choi S."/>
            <person name="Ohtsubo E."/>
            <person name="Baba T."/>
            <person name="Wanner B.L."/>
            <person name="Mori H."/>
            <person name="Horiuchi T."/>
        </authorList>
    </citation>
    <scope>NUCLEOTIDE SEQUENCE [LARGE SCALE GENOMIC DNA]</scope>
    <scope>SEQUENCE REVISION</scope>
    <source>
        <strain>K12 / W3110 / ATCC 27325 / DSM 5911</strain>
    </source>
</reference>
<reference key="5">
    <citation type="journal article" date="1990" name="Cell">
        <title>E. coli 4.5S RNA is part of a ribonucleoprotein particle that has properties related to signal recognition particle.</title>
        <authorList>
            <person name="Ribes V."/>
            <person name="Roemisch K."/>
            <person name="Giner A."/>
            <person name="Dobberstein B."/>
            <person name="Tollervey D."/>
        </authorList>
    </citation>
    <scope>FUNCTION</scope>
</reference>
<reference key="6">
    <citation type="journal article" date="1992" name="Nature">
        <title>Signal-sequence recognition by an Escherichia coli ribonucleoprotein complex.</title>
        <authorList>
            <person name="Luirink J."/>
            <person name="High S."/>
            <person name="Wood H."/>
            <person name="Giner A."/>
            <person name="Tollervey D."/>
            <person name="Dobberstein B."/>
        </authorList>
    </citation>
    <scope>FUNCTION</scope>
    <scope>SUBUNIT</scope>
</reference>
<reference key="7">
    <citation type="journal article" date="1992" name="Nature">
        <title>The E. coli ffh gene is necessary for viability and efficient protein export.</title>
        <authorList>
            <person name="Phillips G.J."/>
            <person name="Silhavy T.J."/>
        </authorList>
    </citation>
    <scope>FUNCTION</scope>
    <scope>SUBUNIT</scope>
</reference>
<reference key="8">
    <citation type="journal article" date="1997" name="EMBO J.">
        <title>Co-translational protein targeting catalyzed by the Escherichia coli signal recognition particle and its receptor.</title>
        <authorList>
            <person name="Powers T."/>
            <person name="Walter P."/>
        </authorList>
    </citation>
    <scope>FUNCTION</scope>
    <scope>SUBUNIT</scope>
</reference>
<reference key="9">
    <citation type="journal article" date="2001" name="Biochemistry">
        <title>Role of SRP RNA in the GTPase cycles of Ffh and FtsY.</title>
        <authorList>
            <person name="Peluso P."/>
            <person name="Shan S.O."/>
            <person name="Nock S."/>
            <person name="Herschlag D."/>
            <person name="Walter P."/>
        </authorList>
    </citation>
    <scope>FUNCTION</scope>
    <scope>CATALYTIC ACTIVITY</scope>
    <scope>ACTIVITY REGULATION</scope>
</reference>
<reference key="10">
    <citation type="journal article" date="2002" name="J. Bacteriol.">
        <title>Genetic screen yields mutations in genes encoding all known components of the Escherichia coli signal recognition particle pathway.</title>
        <authorList>
            <person name="Tian H."/>
            <person name="Beckwith J."/>
        </authorList>
    </citation>
    <scope>FUNCTION</scope>
    <scope>DISRUPTION PHENOTYPE</scope>
    <source>
        <strain>K12</strain>
    </source>
</reference>
<reference key="11">
    <citation type="journal article" date="2003" name="J. Cell Biol.">
        <title>Interplay of signal recognition particle and trigger factor at L23 near the nascent chain exit site on the Escherichia coli ribosome.</title>
        <authorList>
            <person name="Ullers R.S."/>
            <person name="Houben E.N.G."/>
            <person name="Raine A."/>
            <person name="ten Hagen-Jongman C.M."/>
            <person name="Ehrenberg M."/>
            <person name="Brunner J."/>
            <person name="Oudega B."/>
            <person name="Harms N."/>
            <person name="Luirink J."/>
        </authorList>
    </citation>
    <scope>INTERACTION WITH RIBOSOMAL PROTEIN L23 AND NASCENT PROTEIN CHAINS</scope>
    <source>
        <strain>K12 / MC4100 / ATCC 35695 / DSM 6574</strain>
    </source>
</reference>
<reference key="12">
    <citation type="journal article" date="2003" name="RNA">
        <title>The signal recognition particle binds to protein L23 at the peptide exit of the Escherichia coli ribosome.</title>
        <authorList>
            <person name="Gu S.-Q."/>
            <person name="Peske F."/>
            <person name="Wieden H.-J."/>
            <person name="Rodnina M.V."/>
            <person name="Wintermeyer W."/>
        </authorList>
    </citation>
    <scope>INTERACTION WITH RIBOSOMAL PROTEIN L23</scope>
    <scope>DOMAIN</scope>
    <source>
        <strain>MRE-600</strain>
    </source>
</reference>
<reference key="13">
    <citation type="journal article" date="2004" name="J. Biol. Chem.">
        <title>Targeting and translocation of two lipoproteins in Escherichia coli via the SRP/Sec/YidC pathway.</title>
        <authorList>
            <person name="Froderberg L."/>
            <person name="Houben E.N."/>
            <person name="Baars L."/>
            <person name="Luirink J."/>
            <person name="de Gier J.W."/>
        </authorList>
    </citation>
    <scope>FUNCTION IN LIPOPROTEIN EXPORT</scope>
    <scope>DISRUPTION PHENOTYPE</scope>
</reference>
<reference key="14">
    <citation type="journal article" date="2004" name="Proc. Natl. Acad. Sci. U.S.A.">
        <title>Trigger factor binds to ribosome-signal-recognition particle (SRP) complexes and is excluded by binding of the SRP receptor.</title>
        <authorList>
            <person name="Buskiewicz I."/>
            <person name="Deuerling E."/>
            <person name="Gu S.-Q."/>
            <person name="Joeckel J."/>
            <person name="Rodnina M.V."/>
            <person name="Bukau B."/>
            <person name="Wintermeyer W."/>
        </authorList>
    </citation>
    <scope>SIMULTANEOUS BINDING OF TRIGGER FACTOR AND SRP TO THE RIBOSOME</scope>
    <source>
        <strain>MRE-600</strain>
    </source>
</reference>
<reference key="15">
    <citation type="journal article" date="2011" name="Biochim. Biophys. Acta">
        <title>Early targeting events during membrane protein biogenesis in Escherichia coli.</title>
        <authorList>
            <person name="Bibi E."/>
        </authorList>
    </citation>
    <scope>REVIEW</scope>
</reference>
<reference key="16">
    <citation type="journal article" date="1996" name="FEBS Lett.">
        <title>Structure of a methionine-rich segment of Escherichia coli Ffh protein.</title>
        <authorList>
            <person name="Oh D.-B."/>
            <person name="Yi G.-S."/>
            <person name="Chi S.-W."/>
            <person name="Kim H."/>
        </authorList>
    </citation>
    <scope>STRUCTURE BY NMR OF 410-434</scope>
</reference>
<reference key="17">
    <citation type="journal article" date="2000" name="Science">
        <title>Crystal structure of the ribonucleoprotein core of the signal recognition particle.</title>
        <authorList>
            <person name="Batey R.T."/>
            <person name="Rambo R.P."/>
            <person name="Lucast L."/>
            <person name="Rha B."/>
            <person name="Doudna J.A."/>
        </authorList>
    </citation>
    <scope>X-RAY CRYSTALLOGRAPHY (1.80 ANGSTROMS) OF 371-430 IN COMPLEX WITH 4.5S RNA</scope>
    <scope>DOMAIN</scope>
</reference>
<reference key="18">
    <citation type="journal article" date="2002" name="Biochemistry">
        <title>Structural and energetic analysis of metal ions essential to SRP signal recognition domain assembly.</title>
        <authorList>
            <person name="Batey R.T."/>
            <person name="Doudna J.A."/>
        </authorList>
    </citation>
    <scope>X-RAY CRYSTALLOGRAPHY (1.93 ANGSTROMS) OF 328-432</scope>
    <scope>SUBUNIT</scope>
</reference>
<reference key="19">
    <citation type="journal article" date="2006" name="Nature">
        <title>Following the signal sequence from ribosomal tunnel exit to signal recognition particle.</title>
        <authorList>
            <person name="Halic M."/>
            <person name="Blau M."/>
            <person name="Becker T."/>
            <person name="Mielke T."/>
            <person name="Pool M.R."/>
            <person name="Wild K."/>
            <person name="Sinning I."/>
            <person name="Beckmann R."/>
        </authorList>
    </citation>
    <scope>X-RAY CRYSTALLOGRAPHY (8.00 ANGSTROMS) OF 2-431</scope>
</reference>
<reference key="20">
    <citation type="journal article" date="2007" name="Structure">
        <title>A general strategy to solve the phase problem in RNA crystallography.</title>
        <authorList>
            <person name="Keel A.Y."/>
            <person name="Rambo R.P."/>
            <person name="Batey R.T."/>
            <person name="Kieft J.S."/>
        </authorList>
    </citation>
    <scope>X-RAY CRYSTALLOGRAPHY (2.00 ANGSTROMS) OF 329-430</scope>
</reference>
<reference key="21">
    <citation type="journal article" date="2011" name="Nat. Struct. Mol. Biol.">
        <title>Cryo-EM structure of the E. coli translating ribosome in complex with SRP and its receptor.</title>
        <authorList>
            <person name="Estrozi L.F."/>
            <person name="Boehringer D."/>
            <person name="Shan S.O."/>
            <person name="Ban N."/>
            <person name="Schaffitzel C."/>
        </authorList>
    </citation>
    <scope>X-RAY CRYSTALLOGRAPHY (13.50 ANGSTROMS) OF 371-430</scope>
</reference>
<reference key="22">
    <citation type="journal article" date="2011" name="Science">
        <title>The crystal structure of the signal recognition particle in complex with its receptor.</title>
        <authorList>
            <person name="Ataide S.F."/>
            <person name="Schmitz N."/>
            <person name="Shen K."/>
            <person name="Ke A."/>
            <person name="Shan S.O."/>
            <person name="Doudna J.A."/>
            <person name="Ban N."/>
        </authorList>
    </citation>
    <scope>X-RAY CRYSTALLOGRAPHY (3.94 ANGSTROMS) OF 1-433</scope>
</reference>
<sequence>MFDNLTDRLSRTLRNISGRGRLTEDNVKDTLREVRMALLEADVALPVVREFINRVKEKAVGHEVNKSLTPGQEFVKIVRNELVAAMGEENQTLNLAAQPPAVVLMAGLQGAGKTTSVGKLGKFLREKHKKKVLVVSADVYRPAAIKQLETLAEQVGVDFFPSDVGQKPVDIVNAALKEAKLKFYDVLLVDTAGRLHVDEAMMDEIKQVHASINPVETLFVVDAMTGQDAANTAKAFNEALPLTGVVLTKVDGDARGGAALSIRHITGKPIKFLGVGEKTEALEPFHPDRIASRILGMGDVLSLIEDIESKVDRAQAEKLASKLKKGDGFDLNDFLEQLRQMKNMGGMASLMGKLPGMGQIPDNVKSQMDDKVLVRMEAIINSMTMKERAKPEIIKGSRKRRIAAGCGMQVQDVNRLLKQFDDMQRMMKKMKKGGMAKMMRSMKGMMPPGFPGR</sequence>
<proteinExistence type="evidence at protein level"/>
<accession>P0AGD7</accession>
<accession>P07019</accession>
<accession>P77007</accession>
<accession>P77008</accession>
<keyword id="KW-0002">3D-structure</keyword>
<keyword id="KW-0963">Cytoplasm</keyword>
<keyword id="KW-0342">GTP-binding</keyword>
<keyword id="KW-0378">Hydrolase</keyword>
<keyword id="KW-0547">Nucleotide-binding</keyword>
<keyword id="KW-1185">Reference proteome</keyword>
<keyword id="KW-0687">Ribonucleoprotein</keyword>
<keyword id="KW-0694">RNA-binding</keyword>
<keyword id="KW-0733">Signal recognition particle</keyword>
<feature type="chain" id="PRO_0000101153" description="Signal recognition particle protein">
    <location>
        <begin position="1"/>
        <end position="453"/>
    </location>
</feature>
<feature type="binding site" evidence="1">
    <location>
        <begin position="107"/>
        <end position="114"/>
    </location>
    <ligand>
        <name>GTP</name>
        <dbReference type="ChEBI" id="CHEBI:37565"/>
    </ligand>
</feature>
<feature type="binding site" evidence="1">
    <location>
        <begin position="190"/>
        <end position="194"/>
    </location>
    <ligand>
        <name>GTP</name>
        <dbReference type="ChEBI" id="CHEBI:37565"/>
    </ligand>
</feature>
<feature type="binding site" evidence="1">
    <location>
        <begin position="248"/>
        <end position="251"/>
    </location>
    <ligand>
        <name>GTP</name>
        <dbReference type="ChEBI" id="CHEBI:37565"/>
    </ligand>
</feature>
<feature type="helix" evidence="16">
    <location>
        <begin position="10"/>
        <end position="16"/>
    </location>
</feature>
<feature type="helix" evidence="16">
    <location>
        <begin position="25"/>
        <end position="42"/>
    </location>
</feature>
<feature type="helix" evidence="16">
    <location>
        <begin position="48"/>
        <end position="62"/>
    </location>
</feature>
<feature type="helix" evidence="16">
    <location>
        <begin position="64"/>
        <end position="66"/>
    </location>
</feature>
<feature type="strand" evidence="16">
    <location>
        <begin position="67"/>
        <end position="69"/>
    </location>
</feature>
<feature type="helix" evidence="16">
    <location>
        <begin position="70"/>
        <end position="85"/>
    </location>
</feature>
<feature type="strand" evidence="16">
    <location>
        <begin position="96"/>
        <end position="106"/>
    </location>
</feature>
<feature type="helix" evidence="16">
    <location>
        <begin position="113"/>
        <end position="126"/>
    </location>
</feature>
<feature type="strand" evidence="16">
    <location>
        <begin position="132"/>
        <end position="136"/>
    </location>
</feature>
<feature type="helix" evidence="16">
    <location>
        <begin position="144"/>
        <end position="155"/>
    </location>
</feature>
<feature type="strand" evidence="15">
    <location>
        <begin position="158"/>
        <end position="160"/>
    </location>
</feature>
<feature type="helix" evidence="16">
    <location>
        <begin position="168"/>
        <end position="181"/>
    </location>
</feature>
<feature type="strand" evidence="16">
    <location>
        <begin position="185"/>
        <end position="190"/>
    </location>
</feature>
<feature type="helix" evidence="16">
    <location>
        <begin position="199"/>
        <end position="212"/>
    </location>
</feature>
<feature type="strand" evidence="16">
    <location>
        <begin position="215"/>
        <end position="222"/>
    </location>
</feature>
<feature type="helix" evidence="16">
    <location>
        <begin position="223"/>
        <end position="226"/>
    </location>
</feature>
<feature type="helix" evidence="16">
    <location>
        <begin position="227"/>
        <end position="239"/>
    </location>
</feature>
<feature type="strand" evidence="16">
    <location>
        <begin position="244"/>
        <end position="248"/>
    </location>
</feature>
<feature type="helix" evidence="16">
    <location>
        <begin position="250"/>
        <end position="252"/>
    </location>
</feature>
<feature type="helix" evidence="16">
    <location>
        <begin position="258"/>
        <end position="266"/>
    </location>
</feature>
<feature type="strand" evidence="16">
    <location>
        <begin position="270"/>
        <end position="274"/>
    </location>
</feature>
<feature type="strand" evidence="16">
    <location>
        <begin position="276"/>
        <end position="278"/>
    </location>
</feature>
<feature type="strand" evidence="16">
    <location>
        <begin position="282"/>
        <end position="284"/>
    </location>
</feature>
<feature type="helix" evidence="16">
    <location>
        <begin position="287"/>
        <end position="293"/>
    </location>
</feature>
<feature type="helix" evidence="14">
    <location>
        <begin position="331"/>
        <end position="338"/>
    </location>
</feature>
<feature type="helix" evidence="14">
    <location>
        <begin position="373"/>
        <end position="381"/>
    </location>
</feature>
<feature type="helix" evidence="14">
    <location>
        <begin position="385"/>
        <end position="389"/>
    </location>
</feature>
<feature type="helix" evidence="14">
    <location>
        <begin position="391"/>
        <end position="393"/>
    </location>
</feature>
<feature type="helix" evidence="14">
    <location>
        <begin position="396"/>
        <end position="405"/>
    </location>
</feature>
<feature type="helix" evidence="14">
    <location>
        <begin position="410"/>
        <end position="430"/>
    </location>
</feature>
<dbReference type="EC" id="3.6.5.4" evidence="1 3"/>
<dbReference type="EMBL" id="X01818">
    <property type="protein sequence ID" value="CAA25957.1"/>
    <property type="status" value="ALT_INIT"/>
    <property type="molecule type" value="Genomic_DNA"/>
</dbReference>
<dbReference type="EMBL" id="U00096">
    <property type="protein sequence ID" value="AAC75659.1"/>
    <property type="molecule type" value="Genomic_DNA"/>
</dbReference>
<dbReference type="EMBL" id="AP009048">
    <property type="protein sequence ID" value="BAA16495.2"/>
    <property type="molecule type" value="Genomic_DNA"/>
</dbReference>
<dbReference type="PIR" id="E65039">
    <property type="entry name" value="E65039"/>
</dbReference>
<dbReference type="RefSeq" id="NP_417101.1">
    <property type="nucleotide sequence ID" value="NC_000913.3"/>
</dbReference>
<dbReference type="RefSeq" id="WP_000460035.1">
    <property type="nucleotide sequence ID" value="NZ_STEB01000040.1"/>
</dbReference>
<dbReference type="PDB" id="1DUL">
    <property type="method" value="X-ray"/>
    <property type="resolution" value="1.80 A"/>
    <property type="chains" value="A=371-430"/>
</dbReference>
<dbReference type="PDB" id="1HQ1">
    <property type="method" value="X-ray"/>
    <property type="resolution" value="1.52 A"/>
    <property type="chains" value="A=328-432"/>
</dbReference>
<dbReference type="PDB" id="2J28">
    <property type="method" value="EM"/>
    <property type="resolution" value="8.00 A"/>
    <property type="chains" value="9=2-431"/>
</dbReference>
<dbReference type="PDB" id="2PXB">
    <property type="method" value="X-ray"/>
    <property type="resolution" value="2.00 A"/>
    <property type="chains" value="A=329-430"/>
</dbReference>
<dbReference type="PDB" id="2PXD">
    <property type="method" value="X-ray"/>
    <property type="resolution" value="2.00 A"/>
    <property type="chains" value="A=329-430"/>
</dbReference>
<dbReference type="PDB" id="2PXE">
    <property type="method" value="X-ray"/>
    <property type="resolution" value="2.00 A"/>
    <property type="chains" value="A=329-430"/>
</dbReference>
<dbReference type="PDB" id="2PXF">
    <property type="method" value="X-ray"/>
    <property type="resolution" value="2.00 A"/>
    <property type="chains" value="A=329-430"/>
</dbReference>
<dbReference type="PDB" id="2PXK">
    <property type="method" value="X-ray"/>
    <property type="resolution" value="2.00 A"/>
    <property type="chains" value="A=329-430"/>
</dbReference>
<dbReference type="PDB" id="2PXL">
    <property type="method" value="X-ray"/>
    <property type="resolution" value="2.50 A"/>
    <property type="chains" value="A=329-430"/>
</dbReference>
<dbReference type="PDB" id="2PXP">
    <property type="method" value="X-ray"/>
    <property type="resolution" value="2.50 A"/>
    <property type="chains" value="A=329-430"/>
</dbReference>
<dbReference type="PDB" id="2PXQ">
    <property type="method" value="X-ray"/>
    <property type="resolution" value="2.50 A"/>
    <property type="chains" value="A=329-430"/>
</dbReference>
<dbReference type="PDB" id="2PXT">
    <property type="method" value="X-ray"/>
    <property type="resolution" value="2.50 A"/>
    <property type="chains" value="A=329-430"/>
</dbReference>
<dbReference type="PDB" id="2PXU">
    <property type="method" value="X-ray"/>
    <property type="resolution" value="2.50 A"/>
    <property type="chains" value="A=329-430"/>
</dbReference>
<dbReference type="PDB" id="2PXV">
    <property type="method" value="X-ray"/>
    <property type="resolution" value="2.00 A"/>
    <property type="chains" value="A=329-430"/>
</dbReference>
<dbReference type="PDB" id="2XKV">
    <property type="method" value="EM"/>
    <property type="resolution" value="13.50 A"/>
    <property type="chains" value="C=371-430"/>
</dbReference>
<dbReference type="PDB" id="2XXA">
    <property type="method" value="X-ray"/>
    <property type="resolution" value="3.94 A"/>
    <property type="chains" value="A/C=1-433"/>
</dbReference>
<dbReference type="PDB" id="3LQX">
    <property type="method" value="X-ray"/>
    <property type="resolution" value="1.93 A"/>
    <property type="chains" value="A=329-428"/>
</dbReference>
<dbReference type="PDB" id="4C7O">
    <property type="method" value="X-ray"/>
    <property type="resolution" value="2.60 A"/>
    <property type="chains" value="A/C=1-298"/>
</dbReference>
<dbReference type="PDB" id="5AKA">
    <property type="method" value="EM"/>
    <property type="resolution" value="5.70 A"/>
    <property type="chains" value="5=328-436"/>
</dbReference>
<dbReference type="PDB" id="5GAD">
    <property type="method" value="EM"/>
    <property type="resolution" value="3.70 A"/>
    <property type="chains" value="i=4-434"/>
</dbReference>
<dbReference type="PDB" id="5GAF">
    <property type="method" value="EM"/>
    <property type="resolution" value="4.30 A"/>
    <property type="chains" value="i=1-434"/>
</dbReference>
<dbReference type="PDB" id="5GAG">
    <property type="method" value="EM"/>
    <property type="resolution" value="3.80 A"/>
    <property type="chains" value="i=4-434"/>
</dbReference>
<dbReference type="PDB" id="5GAH">
    <property type="method" value="EM"/>
    <property type="resolution" value="3.80 A"/>
    <property type="chains" value="i=1-434"/>
</dbReference>
<dbReference type="PDB" id="5NCO">
    <property type="method" value="EM"/>
    <property type="resolution" value="4.80 A"/>
    <property type="chains" value="i=4-434"/>
</dbReference>
<dbReference type="PDB" id="7O9G">
    <property type="method" value="X-ray"/>
    <property type="resolution" value="2.80 A"/>
    <property type="chains" value="A=2-299"/>
</dbReference>
<dbReference type="PDB" id="7O9I">
    <property type="method" value="X-ray"/>
    <property type="resolution" value="2.49 A"/>
    <property type="chains" value="A=3-299"/>
</dbReference>
<dbReference type="PDBsum" id="1DUL"/>
<dbReference type="PDBsum" id="1HQ1"/>
<dbReference type="PDBsum" id="2J28"/>
<dbReference type="PDBsum" id="2PXB"/>
<dbReference type="PDBsum" id="2PXD"/>
<dbReference type="PDBsum" id="2PXE"/>
<dbReference type="PDBsum" id="2PXF"/>
<dbReference type="PDBsum" id="2PXK"/>
<dbReference type="PDBsum" id="2PXL"/>
<dbReference type="PDBsum" id="2PXP"/>
<dbReference type="PDBsum" id="2PXQ"/>
<dbReference type="PDBsum" id="2PXT"/>
<dbReference type="PDBsum" id="2PXU"/>
<dbReference type="PDBsum" id="2PXV"/>
<dbReference type="PDBsum" id="2XKV"/>
<dbReference type="PDBsum" id="2XXA"/>
<dbReference type="PDBsum" id="3LQX"/>
<dbReference type="PDBsum" id="4C7O"/>
<dbReference type="PDBsum" id="5AKA"/>
<dbReference type="PDBsum" id="5GAD"/>
<dbReference type="PDBsum" id="5GAF"/>
<dbReference type="PDBsum" id="5GAG"/>
<dbReference type="PDBsum" id="5GAH"/>
<dbReference type="PDBsum" id="5NCO"/>
<dbReference type="PDBsum" id="7O9G"/>
<dbReference type="PDBsum" id="7O9I"/>
<dbReference type="EMDB" id="EMD-1261"/>
<dbReference type="EMDB" id="EMD-3617"/>
<dbReference type="EMDB" id="EMD-8000"/>
<dbReference type="EMDB" id="EMD-8002"/>
<dbReference type="EMDB" id="EMD-8003"/>
<dbReference type="EMDB" id="EMD-8004"/>
<dbReference type="SMR" id="P0AGD7"/>
<dbReference type="BioGRID" id="4262086">
    <property type="interactions" value="347"/>
</dbReference>
<dbReference type="BioGRID" id="851437">
    <property type="interactions" value="1"/>
</dbReference>
<dbReference type="DIP" id="DIP-31865N"/>
<dbReference type="FunCoup" id="P0AGD7">
    <property type="interactions" value="857"/>
</dbReference>
<dbReference type="IntAct" id="P0AGD7">
    <property type="interactions" value="23"/>
</dbReference>
<dbReference type="STRING" id="511145.b2610"/>
<dbReference type="TCDB" id="3.A.5.1.1">
    <property type="family name" value="the general secretory pathway (sec) family"/>
</dbReference>
<dbReference type="MetOSite" id="P0AGD7"/>
<dbReference type="jPOST" id="P0AGD7"/>
<dbReference type="PaxDb" id="511145-b2610"/>
<dbReference type="EnsemblBacteria" id="AAC75659">
    <property type="protein sequence ID" value="AAC75659"/>
    <property type="gene ID" value="b2610"/>
</dbReference>
<dbReference type="GeneID" id="93774460"/>
<dbReference type="GeneID" id="947102"/>
<dbReference type="KEGG" id="ecj:JW5414"/>
<dbReference type="KEGG" id="eco:b2610"/>
<dbReference type="KEGG" id="ecoc:C3026_14450"/>
<dbReference type="PATRIC" id="fig|1411691.4.peg.4129"/>
<dbReference type="EchoBASE" id="EB0296"/>
<dbReference type="eggNOG" id="COG0541">
    <property type="taxonomic scope" value="Bacteria"/>
</dbReference>
<dbReference type="HOGENOM" id="CLU_009301_6_0_6"/>
<dbReference type="InParanoid" id="P0AGD7"/>
<dbReference type="OMA" id="GMTGQDA"/>
<dbReference type="OrthoDB" id="9804720at2"/>
<dbReference type="PhylomeDB" id="P0AGD7"/>
<dbReference type="BioCyc" id="EcoCyc:EG10300-MONOMER"/>
<dbReference type="BRENDA" id="3.6.5.4">
    <property type="organism ID" value="2026"/>
</dbReference>
<dbReference type="EvolutionaryTrace" id="P0AGD7"/>
<dbReference type="PRO" id="PR:P0AGD7"/>
<dbReference type="Proteomes" id="UP000000625">
    <property type="component" value="Chromosome"/>
</dbReference>
<dbReference type="GO" id="GO:0005829">
    <property type="term" value="C:cytosol"/>
    <property type="evidence" value="ECO:0000314"/>
    <property type="project" value="EcoCyc"/>
</dbReference>
<dbReference type="GO" id="GO:1990904">
    <property type="term" value="C:ribonucleoprotein complex"/>
    <property type="evidence" value="ECO:0000314"/>
    <property type="project" value="EcoliWiki"/>
</dbReference>
<dbReference type="GO" id="GO:0048500">
    <property type="term" value="C:signal recognition particle"/>
    <property type="evidence" value="ECO:0000315"/>
    <property type="project" value="EcoliWiki"/>
</dbReference>
<dbReference type="GO" id="GO:0008312">
    <property type="term" value="F:7S RNA binding"/>
    <property type="evidence" value="ECO:0007669"/>
    <property type="project" value="InterPro"/>
</dbReference>
<dbReference type="GO" id="GO:0016887">
    <property type="term" value="F:ATP hydrolysis activity"/>
    <property type="evidence" value="ECO:0007669"/>
    <property type="project" value="InterPro"/>
</dbReference>
<dbReference type="GO" id="GO:0005525">
    <property type="term" value="F:GTP binding"/>
    <property type="evidence" value="ECO:0000314"/>
    <property type="project" value="EcoliWiki"/>
</dbReference>
<dbReference type="GO" id="GO:0003924">
    <property type="term" value="F:GTPase activity"/>
    <property type="evidence" value="ECO:0000315"/>
    <property type="project" value="EcoCyc"/>
</dbReference>
<dbReference type="GO" id="GO:0006612">
    <property type="term" value="P:protein targeting to membrane"/>
    <property type="evidence" value="ECO:0000315"/>
    <property type="project" value="EcoliWiki"/>
</dbReference>
<dbReference type="GO" id="GO:0006614">
    <property type="term" value="P:SRP-dependent cotranslational protein targeting to membrane"/>
    <property type="evidence" value="ECO:0007669"/>
    <property type="project" value="InterPro"/>
</dbReference>
<dbReference type="CDD" id="cd18539">
    <property type="entry name" value="SRP_G"/>
    <property type="match status" value="1"/>
</dbReference>
<dbReference type="FunFam" id="3.40.50.300:FF:000022">
    <property type="entry name" value="Signal recognition particle 54 kDa subunit"/>
    <property type="match status" value="1"/>
</dbReference>
<dbReference type="FunFam" id="1.20.120.140:FF:000001">
    <property type="entry name" value="Signal recognition particle GTPase"/>
    <property type="match status" value="1"/>
</dbReference>
<dbReference type="FunFam" id="1.10.260.30:FF:000001">
    <property type="entry name" value="Signal recognition particle protein"/>
    <property type="match status" value="1"/>
</dbReference>
<dbReference type="Gene3D" id="3.40.50.300">
    <property type="entry name" value="P-loop containing nucleotide triphosphate hydrolases"/>
    <property type="match status" value="1"/>
</dbReference>
<dbReference type="Gene3D" id="1.20.120.140">
    <property type="entry name" value="Signal recognition particle SRP54, nucleotide-binding domain"/>
    <property type="match status" value="1"/>
</dbReference>
<dbReference type="Gene3D" id="1.10.260.30">
    <property type="entry name" value="Signal recognition particle, SRP54 subunit, M-domain"/>
    <property type="match status" value="1"/>
</dbReference>
<dbReference type="HAMAP" id="MF_00306">
    <property type="entry name" value="SRP54"/>
    <property type="match status" value="1"/>
</dbReference>
<dbReference type="InterPro" id="IPR003593">
    <property type="entry name" value="AAA+_ATPase"/>
</dbReference>
<dbReference type="InterPro" id="IPR027417">
    <property type="entry name" value="P-loop_NTPase"/>
</dbReference>
<dbReference type="InterPro" id="IPR036891">
    <property type="entry name" value="Signal_recog_part_SRP54_M_sf"/>
</dbReference>
<dbReference type="InterPro" id="IPR013822">
    <property type="entry name" value="Signal_recog_particl_SRP54_hlx"/>
</dbReference>
<dbReference type="InterPro" id="IPR004125">
    <property type="entry name" value="Signal_recog_particle_SRP54_M"/>
</dbReference>
<dbReference type="InterPro" id="IPR004780">
    <property type="entry name" value="SRP"/>
</dbReference>
<dbReference type="InterPro" id="IPR022941">
    <property type="entry name" value="SRP54"/>
</dbReference>
<dbReference type="InterPro" id="IPR000897">
    <property type="entry name" value="SRP54_GTPase_dom"/>
</dbReference>
<dbReference type="InterPro" id="IPR042101">
    <property type="entry name" value="SRP54_N_sf"/>
</dbReference>
<dbReference type="NCBIfam" id="TIGR00959">
    <property type="entry name" value="ffh"/>
    <property type="match status" value="1"/>
</dbReference>
<dbReference type="PANTHER" id="PTHR11564">
    <property type="entry name" value="SIGNAL RECOGNITION PARTICLE 54K PROTEIN SRP54"/>
    <property type="match status" value="1"/>
</dbReference>
<dbReference type="PANTHER" id="PTHR11564:SF5">
    <property type="entry name" value="SIGNAL RECOGNITION PARTICLE SUBUNIT SRP54"/>
    <property type="match status" value="1"/>
</dbReference>
<dbReference type="Pfam" id="PF00448">
    <property type="entry name" value="SRP54"/>
    <property type="match status" value="1"/>
</dbReference>
<dbReference type="Pfam" id="PF02881">
    <property type="entry name" value="SRP54_N"/>
    <property type="match status" value="1"/>
</dbReference>
<dbReference type="Pfam" id="PF02978">
    <property type="entry name" value="SRP_SPB"/>
    <property type="match status" value="1"/>
</dbReference>
<dbReference type="SMART" id="SM00382">
    <property type="entry name" value="AAA"/>
    <property type="match status" value="1"/>
</dbReference>
<dbReference type="SMART" id="SM00962">
    <property type="entry name" value="SRP54"/>
    <property type="match status" value="1"/>
</dbReference>
<dbReference type="SMART" id="SM00963">
    <property type="entry name" value="SRP54_N"/>
    <property type="match status" value="1"/>
</dbReference>
<dbReference type="SUPFAM" id="SSF52540">
    <property type="entry name" value="P-loop containing nucleoside triphosphate hydrolases"/>
    <property type="match status" value="1"/>
</dbReference>
<dbReference type="SUPFAM" id="SSF47446">
    <property type="entry name" value="Signal peptide-binding domain"/>
    <property type="match status" value="1"/>
</dbReference>
<dbReference type="PROSITE" id="PS00300">
    <property type="entry name" value="SRP54"/>
    <property type="match status" value="1"/>
</dbReference>
<gene>
    <name evidence="1" type="primary">ffh</name>
    <name type="ordered locus">b2610</name>
    <name type="ordered locus">JW5414</name>
</gene>